<accession>Q8L7R5</accession>
<accession>Q9LTC8</accession>
<reference key="1">
    <citation type="journal article" date="2000" name="DNA Res.">
        <title>Structural analysis of Arabidopsis thaliana chromosome 3. I. Sequence features of the regions of 4,504,864 bp covered by sixty P1 and TAC clones.</title>
        <authorList>
            <person name="Sato S."/>
            <person name="Nakamura Y."/>
            <person name="Kaneko T."/>
            <person name="Katoh T."/>
            <person name="Asamizu E."/>
            <person name="Tabata S."/>
        </authorList>
    </citation>
    <scope>NUCLEOTIDE SEQUENCE [LARGE SCALE GENOMIC DNA]</scope>
    <source>
        <strain>cv. Columbia</strain>
    </source>
</reference>
<reference key="2">
    <citation type="journal article" date="2017" name="Plant J.">
        <title>Araport11: a complete reannotation of the Arabidopsis thaliana reference genome.</title>
        <authorList>
            <person name="Cheng C.Y."/>
            <person name="Krishnakumar V."/>
            <person name="Chan A.P."/>
            <person name="Thibaud-Nissen F."/>
            <person name="Schobel S."/>
            <person name="Town C.D."/>
        </authorList>
    </citation>
    <scope>GENOME REANNOTATION</scope>
    <source>
        <strain>cv. Columbia</strain>
    </source>
</reference>
<reference key="3">
    <citation type="journal article" date="2003" name="Science">
        <title>Empirical analysis of transcriptional activity in the Arabidopsis genome.</title>
        <authorList>
            <person name="Yamada K."/>
            <person name="Lim J."/>
            <person name="Dale J.M."/>
            <person name="Chen H."/>
            <person name="Shinn P."/>
            <person name="Palm C.J."/>
            <person name="Southwick A.M."/>
            <person name="Wu H.C."/>
            <person name="Kim C.J."/>
            <person name="Nguyen M."/>
            <person name="Pham P.K."/>
            <person name="Cheuk R.F."/>
            <person name="Karlin-Newmann G."/>
            <person name="Liu S.X."/>
            <person name="Lam B."/>
            <person name="Sakano H."/>
            <person name="Wu T."/>
            <person name="Yu G."/>
            <person name="Miranda M."/>
            <person name="Quach H.L."/>
            <person name="Tripp M."/>
            <person name="Chang C.H."/>
            <person name="Lee J.M."/>
            <person name="Toriumi M.J."/>
            <person name="Chan M.M."/>
            <person name="Tang C.C."/>
            <person name="Onodera C.S."/>
            <person name="Deng J.M."/>
            <person name="Akiyama K."/>
            <person name="Ansari Y."/>
            <person name="Arakawa T."/>
            <person name="Banh J."/>
            <person name="Banno F."/>
            <person name="Bowser L."/>
            <person name="Brooks S.Y."/>
            <person name="Carninci P."/>
            <person name="Chao Q."/>
            <person name="Choy N."/>
            <person name="Enju A."/>
            <person name="Goldsmith A.D."/>
            <person name="Gurjal M."/>
            <person name="Hansen N.F."/>
            <person name="Hayashizaki Y."/>
            <person name="Johnson-Hopson C."/>
            <person name="Hsuan V.W."/>
            <person name="Iida K."/>
            <person name="Karnes M."/>
            <person name="Khan S."/>
            <person name="Koesema E."/>
            <person name="Ishida J."/>
            <person name="Jiang P.X."/>
            <person name="Jones T."/>
            <person name="Kawai J."/>
            <person name="Kamiya A."/>
            <person name="Meyers C."/>
            <person name="Nakajima M."/>
            <person name="Narusaka M."/>
            <person name="Seki M."/>
            <person name="Sakurai T."/>
            <person name="Satou M."/>
            <person name="Tamse R."/>
            <person name="Vaysberg M."/>
            <person name="Wallender E.K."/>
            <person name="Wong C."/>
            <person name="Yamamura Y."/>
            <person name="Yuan S."/>
            <person name="Shinozaki K."/>
            <person name="Davis R.W."/>
            <person name="Theologis A."/>
            <person name="Ecker J.R."/>
        </authorList>
    </citation>
    <scope>NUCLEOTIDE SEQUENCE [LARGE SCALE MRNA]</scope>
    <source>
        <strain>cv. Columbia</strain>
    </source>
</reference>
<reference key="4">
    <citation type="journal article" date="2014" name="Plant Physiol.">
        <title>Functional and evolutionary analysis of the CASPARIAN STRIP MEMBRANE DOMAIN PROTEIN family.</title>
        <authorList>
            <person name="Roppolo D."/>
            <person name="Boeckmann B."/>
            <person name="Pfister A."/>
            <person name="Boutet E."/>
            <person name="Rubio M.C."/>
            <person name="Denervaud-Tendon V."/>
            <person name="Vermeer J.E."/>
            <person name="Gheyselinck J."/>
            <person name="Xenarios I."/>
            <person name="Geldner N."/>
        </authorList>
    </citation>
    <scope>TISSUE SPECIFICITY</scope>
    <scope>DEVELOPMENTAL STAGE</scope>
    <scope>SUBCELLULAR LOCATION</scope>
    <scope>GENE FAMILY</scope>
    <scope>NOMENCLATURE</scope>
</reference>
<comment type="subunit">
    <text evidence="1">Homodimer and heterodimers.</text>
</comment>
<comment type="subcellular location">
    <subcellularLocation>
        <location evidence="3">Cell membrane</location>
        <topology evidence="3">Multi-pass membrane protein</topology>
    </subcellularLocation>
</comment>
<comment type="tissue specificity">
    <text evidence="3">Expressed in the stele of the root and in leaves.</text>
</comment>
<comment type="developmental stage">
    <text evidence="3">Present in the root maturation zone, and in lateral root primordia. Expressed in two parallel files that are probably xylem pole pericycle cells. In leaves, detected in files of cells parallel to the vasculature.</text>
</comment>
<comment type="similarity">
    <text evidence="4">Belongs to the Casparian strip membrane proteins (CASP) family.</text>
</comment>
<comment type="sequence caution" evidence="4">
    <conflict type="erroneous gene model prediction">
        <sequence resource="EMBL-CDS" id="BAA95733"/>
    </conflict>
</comment>
<name>CSPLG_ARATH</name>
<keyword id="KW-1003">Cell membrane</keyword>
<keyword id="KW-0472">Membrane</keyword>
<keyword id="KW-1185">Reference proteome</keyword>
<keyword id="KW-0812">Transmembrane</keyword>
<keyword id="KW-1133">Transmembrane helix</keyword>
<sequence length="152" mass="16092">MIDIPGTPGTLTGLVLRISQCVFAAGSISYMVTSGGFFSFTAFCYLIAAMGLQVIWSFGLAILDTFALVRKKTLLSPVLVSLFVVGDWVTSTLSLAGASSSAGITVLYFGDLGSCSFEAECWKYQLSVALAFLCWITIAVSSLTTLWLLASA</sequence>
<feature type="chain" id="PRO_0000308669" description="CASP-like protein 5B3">
    <location>
        <begin position="1"/>
        <end position="152"/>
    </location>
</feature>
<feature type="topological domain" description="Cytoplasmic" evidence="2">
    <location>
        <begin position="1"/>
        <end position="21"/>
    </location>
</feature>
<feature type="transmembrane region" description="Helical" evidence="2">
    <location>
        <begin position="22"/>
        <end position="42"/>
    </location>
</feature>
<feature type="transmembrane region" description="Helical" evidence="2">
    <location>
        <begin position="43"/>
        <end position="63"/>
    </location>
</feature>
<feature type="topological domain" description="Extracellular" evidence="2">
    <location>
        <begin position="64"/>
        <end position="77"/>
    </location>
</feature>
<feature type="transmembrane region" description="Helical" evidence="2">
    <location>
        <begin position="78"/>
        <end position="98"/>
    </location>
</feature>
<feature type="topological domain" description="Cytoplasmic" evidence="2">
    <location>
        <begin position="99"/>
        <end position="127"/>
    </location>
</feature>
<feature type="transmembrane region" description="Helical" evidence="2">
    <location>
        <begin position="128"/>
        <end position="148"/>
    </location>
</feature>
<feature type="topological domain" description="Extracellular" evidence="2">
    <location>
        <begin position="149"/>
        <end position="152"/>
    </location>
</feature>
<gene>
    <name type="ordered locus">At3g23200</name>
    <name type="ORF">K14B15.11</name>
</gene>
<protein>
    <recommendedName>
        <fullName>CASP-like protein 5B3</fullName>
        <shortName>AtCASPL5B3</shortName>
    </recommendedName>
</protein>
<proteinExistence type="evidence at transcript level"/>
<organism>
    <name type="scientific">Arabidopsis thaliana</name>
    <name type="common">Mouse-ear cress</name>
    <dbReference type="NCBI Taxonomy" id="3702"/>
    <lineage>
        <taxon>Eukaryota</taxon>
        <taxon>Viridiplantae</taxon>
        <taxon>Streptophyta</taxon>
        <taxon>Embryophyta</taxon>
        <taxon>Tracheophyta</taxon>
        <taxon>Spermatophyta</taxon>
        <taxon>Magnoliopsida</taxon>
        <taxon>eudicotyledons</taxon>
        <taxon>Gunneridae</taxon>
        <taxon>Pentapetalae</taxon>
        <taxon>rosids</taxon>
        <taxon>malvids</taxon>
        <taxon>Brassicales</taxon>
        <taxon>Brassicaceae</taxon>
        <taxon>Camelineae</taxon>
        <taxon>Arabidopsis</taxon>
    </lineage>
</organism>
<evidence type="ECO:0000250" key="1"/>
<evidence type="ECO:0000255" key="2"/>
<evidence type="ECO:0000269" key="3">
    <source>
    </source>
</evidence>
<evidence type="ECO:0000305" key="4"/>
<dbReference type="EMBL" id="AB025608">
    <property type="protein sequence ID" value="BAA95733.1"/>
    <property type="status" value="ALT_SEQ"/>
    <property type="molecule type" value="Genomic_DNA"/>
</dbReference>
<dbReference type="EMBL" id="CP002686">
    <property type="protein sequence ID" value="AEE76734.1"/>
    <property type="molecule type" value="Genomic_DNA"/>
</dbReference>
<dbReference type="EMBL" id="AY128308">
    <property type="protein sequence ID" value="AAM91511.1"/>
    <property type="molecule type" value="mRNA"/>
</dbReference>
<dbReference type="EMBL" id="BT006540">
    <property type="protein sequence ID" value="AAP21348.1"/>
    <property type="molecule type" value="mRNA"/>
</dbReference>
<dbReference type="RefSeq" id="NP_188961.2">
    <property type="nucleotide sequence ID" value="NM_113221.3"/>
</dbReference>
<dbReference type="FunCoup" id="Q8L7R5">
    <property type="interactions" value="18"/>
</dbReference>
<dbReference type="PaxDb" id="3702-AT3G23200.1"/>
<dbReference type="EnsemblPlants" id="AT3G23200.1">
    <property type="protein sequence ID" value="AT3G23200.1"/>
    <property type="gene ID" value="AT3G23200"/>
</dbReference>
<dbReference type="GeneID" id="821898"/>
<dbReference type="Gramene" id="AT3G23200.1">
    <property type="protein sequence ID" value="AT3G23200.1"/>
    <property type="gene ID" value="AT3G23200"/>
</dbReference>
<dbReference type="KEGG" id="ath:AT3G23200"/>
<dbReference type="Araport" id="AT3G23200"/>
<dbReference type="TAIR" id="AT3G23200">
    <property type="gene designation" value="CASPL5B3"/>
</dbReference>
<dbReference type="eggNOG" id="ENOG502RYAJ">
    <property type="taxonomic scope" value="Eukaryota"/>
</dbReference>
<dbReference type="HOGENOM" id="CLU_103961_1_0_1"/>
<dbReference type="InParanoid" id="Q8L7R5"/>
<dbReference type="OMA" id="FLAFMSW"/>
<dbReference type="PhylomeDB" id="Q8L7R5"/>
<dbReference type="PRO" id="PR:Q8L7R5"/>
<dbReference type="Proteomes" id="UP000006548">
    <property type="component" value="Chromosome 3"/>
</dbReference>
<dbReference type="ExpressionAtlas" id="Q8L7R5">
    <property type="expression patterns" value="baseline and differential"/>
</dbReference>
<dbReference type="GO" id="GO:0005886">
    <property type="term" value="C:plasma membrane"/>
    <property type="evidence" value="ECO:0000314"/>
    <property type="project" value="UniProtKB"/>
</dbReference>
<dbReference type="InterPro" id="IPR006702">
    <property type="entry name" value="CASP_dom"/>
</dbReference>
<dbReference type="InterPro" id="IPR045009">
    <property type="entry name" value="CASPL-5"/>
</dbReference>
<dbReference type="PANTHER" id="PTHR32021">
    <property type="entry name" value="CASP-LIKE PROTEIN 5B3"/>
    <property type="match status" value="1"/>
</dbReference>
<dbReference type="PANTHER" id="PTHR32021:SF5">
    <property type="entry name" value="CASP-LIKE PROTEIN 5B3"/>
    <property type="match status" value="1"/>
</dbReference>
<dbReference type="Pfam" id="PF04535">
    <property type="entry name" value="CASP_dom"/>
    <property type="match status" value="1"/>
</dbReference>